<keyword id="KW-0058">Aromatic hydrocarbons catabolism</keyword>
<keyword id="KW-0456">Lyase</keyword>
<keyword id="KW-0464">Manganese</keyword>
<keyword id="KW-0479">Metal-binding</keyword>
<sequence>MSLAGKKITVHDMSLRDGMHPKRHQITLDQMRDIARGLDAAGVPLIEVTHGDGLGGASVNYGFPAHTDEAYLSAVIPELKQARVSALLLPGIGTVEHLRMAHALGVGTIRVATHCTEADVSEQHIGLARTLGLDTVGFLMMAHMSSPAQLVVQAKLMESYGANCIYITDSAGHMLPDDVTARIGQVRDALKPETELGFHGHHNLAMGVANSVAAVAAGANRIDAAAAGLGAGAGNTPMEVFVAVCDRMGIETGVDVFAISDVAEDLVVPIMDAPIRLDRDALTLGYAGVYSSFLLFAKRAEAKYGIPARDILVELGRQRLVGGQEDMIEDAALTMVRAREVAA</sequence>
<feature type="chain" id="PRO_0000387795" description="4-hydroxy-2-oxovalerate aldolase 1">
    <location>
        <begin position="1"/>
        <end position="343"/>
    </location>
</feature>
<feature type="domain" description="Pyruvate carboxyltransferase" evidence="1">
    <location>
        <begin position="8"/>
        <end position="260"/>
    </location>
</feature>
<feature type="active site" description="Proton acceptor" evidence="1">
    <location>
        <position position="20"/>
    </location>
</feature>
<feature type="binding site" evidence="1">
    <location>
        <begin position="16"/>
        <end position="17"/>
    </location>
    <ligand>
        <name>substrate</name>
    </ligand>
</feature>
<feature type="binding site" evidence="1">
    <location>
        <position position="17"/>
    </location>
    <ligand>
        <name>Mn(2+)</name>
        <dbReference type="ChEBI" id="CHEBI:29035"/>
    </ligand>
</feature>
<feature type="binding site" evidence="1">
    <location>
        <position position="170"/>
    </location>
    <ligand>
        <name>substrate</name>
    </ligand>
</feature>
<feature type="binding site" evidence="1">
    <location>
        <position position="199"/>
    </location>
    <ligand>
        <name>Mn(2+)</name>
        <dbReference type="ChEBI" id="CHEBI:29035"/>
    </ligand>
</feature>
<feature type="binding site" evidence="1">
    <location>
        <position position="199"/>
    </location>
    <ligand>
        <name>substrate</name>
    </ligand>
</feature>
<feature type="binding site" evidence="1">
    <location>
        <position position="201"/>
    </location>
    <ligand>
        <name>Mn(2+)</name>
        <dbReference type="ChEBI" id="CHEBI:29035"/>
    </ligand>
</feature>
<feature type="binding site" evidence="1">
    <location>
        <position position="290"/>
    </location>
    <ligand>
        <name>substrate</name>
    </ligand>
</feature>
<feature type="site" description="Transition state stabilizer" evidence="1">
    <location>
        <position position="16"/>
    </location>
</feature>
<evidence type="ECO:0000255" key="1">
    <source>
        <dbReference type="HAMAP-Rule" id="MF_01656"/>
    </source>
</evidence>
<organism>
    <name type="scientific">Burkholderia cenocepacia (strain ATCC BAA-245 / DSM 16553 / LMG 16656 / NCTC 13227 / J2315 / CF5610)</name>
    <name type="common">Burkholderia cepacia (strain J2315)</name>
    <dbReference type="NCBI Taxonomy" id="216591"/>
    <lineage>
        <taxon>Bacteria</taxon>
        <taxon>Pseudomonadati</taxon>
        <taxon>Pseudomonadota</taxon>
        <taxon>Betaproteobacteria</taxon>
        <taxon>Burkholderiales</taxon>
        <taxon>Burkholderiaceae</taxon>
        <taxon>Burkholderia</taxon>
        <taxon>Burkholderia cepacia complex</taxon>
    </lineage>
</organism>
<comment type="catalytic activity">
    <reaction evidence="1">
        <text>(S)-4-hydroxy-2-oxopentanoate = acetaldehyde + pyruvate</text>
        <dbReference type="Rhea" id="RHEA:22624"/>
        <dbReference type="ChEBI" id="CHEBI:15343"/>
        <dbReference type="ChEBI" id="CHEBI:15361"/>
        <dbReference type="ChEBI" id="CHEBI:73143"/>
        <dbReference type="EC" id="4.1.3.39"/>
    </reaction>
</comment>
<comment type="similarity">
    <text evidence="1">Belongs to the 4-hydroxy-2-oxovalerate aldolase family.</text>
</comment>
<proteinExistence type="inferred from homology"/>
<dbReference type="EC" id="4.1.3.39" evidence="1"/>
<dbReference type="EMBL" id="AM747721">
    <property type="protein sequence ID" value="CAR55471.1"/>
    <property type="molecule type" value="Genomic_DNA"/>
</dbReference>
<dbReference type="SMR" id="B4EK78"/>
<dbReference type="KEGG" id="bcj:BCAM1615"/>
<dbReference type="eggNOG" id="COG0119">
    <property type="taxonomic scope" value="Bacteria"/>
</dbReference>
<dbReference type="HOGENOM" id="CLU_049173_0_0_4"/>
<dbReference type="BioCyc" id="BCEN216591:G1G1V-5641-MONOMER"/>
<dbReference type="Proteomes" id="UP000001035">
    <property type="component" value="Chromosome 2"/>
</dbReference>
<dbReference type="GO" id="GO:0003852">
    <property type="term" value="F:2-isopropylmalate synthase activity"/>
    <property type="evidence" value="ECO:0007669"/>
    <property type="project" value="TreeGrafter"/>
</dbReference>
<dbReference type="GO" id="GO:0008701">
    <property type="term" value="F:4-hydroxy-2-oxovalerate aldolase activity"/>
    <property type="evidence" value="ECO:0007669"/>
    <property type="project" value="UniProtKB-UniRule"/>
</dbReference>
<dbReference type="GO" id="GO:0030145">
    <property type="term" value="F:manganese ion binding"/>
    <property type="evidence" value="ECO:0007669"/>
    <property type="project" value="UniProtKB-UniRule"/>
</dbReference>
<dbReference type="GO" id="GO:0009056">
    <property type="term" value="P:catabolic process"/>
    <property type="evidence" value="ECO:0007669"/>
    <property type="project" value="UniProtKB-KW"/>
</dbReference>
<dbReference type="GO" id="GO:0009098">
    <property type="term" value="P:L-leucine biosynthetic process"/>
    <property type="evidence" value="ECO:0007669"/>
    <property type="project" value="TreeGrafter"/>
</dbReference>
<dbReference type="CDD" id="cd07943">
    <property type="entry name" value="DRE_TIM_HOA"/>
    <property type="match status" value="1"/>
</dbReference>
<dbReference type="Gene3D" id="1.10.8.60">
    <property type="match status" value="1"/>
</dbReference>
<dbReference type="Gene3D" id="3.20.20.70">
    <property type="entry name" value="Aldolase class I"/>
    <property type="match status" value="1"/>
</dbReference>
<dbReference type="HAMAP" id="MF_01656">
    <property type="entry name" value="HOA"/>
    <property type="match status" value="1"/>
</dbReference>
<dbReference type="InterPro" id="IPR050073">
    <property type="entry name" value="2-IPM_HCS-like"/>
</dbReference>
<dbReference type="InterPro" id="IPR017629">
    <property type="entry name" value="4OH_2_O-val_aldolase"/>
</dbReference>
<dbReference type="InterPro" id="IPR013785">
    <property type="entry name" value="Aldolase_TIM"/>
</dbReference>
<dbReference type="InterPro" id="IPR012425">
    <property type="entry name" value="DmpG_comm"/>
</dbReference>
<dbReference type="InterPro" id="IPR035685">
    <property type="entry name" value="DRE_TIM_HOA"/>
</dbReference>
<dbReference type="InterPro" id="IPR000891">
    <property type="entry name" value="PYR_CT"/>
</dbReference>
<dbReference type="NCBIfam" id="TIGR03217">
    <property type="entry name" value="4OH_2_O_val_ald"/>
    <property type="match status" value="1"/>
</dbReference>
<dbReference type="NCBIfam" id="NF006049">
    <property type="entry name" value="PRK08195.1"/>
    <property type="match status" value="1"/>
</dbReference>
<dbReference type="PANTHER" id="PTHR10277:SF9">
    <property type="entry name" value="2-ISOPROPYLMALATE SYNTHASE 1, CHLOROPLASTIC-RELATED"/>
    <property type="match status" value="1"/>
</dbReference>
<dbReference type="PANTHER" id="PTHR10277">
    <property type="entry name" value="HOMOCITRATE SYNTHASE-RELATED"/>
    <property type="match status" value="1"/>
</dbReference>
<dbReference type="Pfam" id="PF07836">
    <property type="entry name" value="DmpG_comm"/>
    <property type="match status" value="1"/>
</dbReference>
<dbReference type="Pfam" id="PF00682">
    <property type="entry name" value="HMGL-like"/>
    <property type="match status" value="1"/>
</dbReference>
<dbReference type="SUPFAM" id="SSF51569">
    <property type="entry name" value="Aldolase"/>
    <property type="match status" value="1"/>
</dbReference>
<dbReference type="SUPFAM" id="SSF89000">
    <property type="entry name" value="post-HMGL domain-like"/>
    <property type="match status" value="1"/>
</dbReference>
<dbReference type="PROSITE" id="PS50991">
    <property type="entry name" value="PYR_CT"/>
    <property type="match status" value="1"/>
</dbReference>
<name>HOA1_BURCJ</name>
<gene>
    <name type="primary">bphI</name>
    <name type="ordered locus">BceJ2315_50640</name>
    <name type="ORF">BCAM1615</name>
</gene>
<reference key="1">
    <citation type="journal article" date="2009" name="J. Bacteriol.">
        <title>The genome of Burkholderia cenocepacia J2315, an epidemic pathogen of cystic fibrosis patients.</title>
        <authorList>
            <person name="Holden M.T."/>
            <person name="Seth-Smith H.M."/>
            <person name="Crossman L.C."/>
            <person name="Sebaihia M."/>
            <person name="Bentley S.D."/>
            <person name="Cerdeno-Tarraga A.M."/>
            <person name="Thomson N.R."/>
            <person name="Bason N."/>
            <person name="Quail M.A."/>
            <person name="Sharp S."/>
            <person name="Cherevach I."/>
            <person name="Churcher C."/>
            <person name="Goodhead I."/>
            <person name="Hauser H."/>
            <person name="Holroyd N."/>
            <person name="Mungall K."/>
            <person name="Scott P."/>
            <person name="Walker D."/>
            <person name="White B."/>
            <person name="Rose H."/>
            <person name="Iversen P."/>
            <person name="Mil-Homens D."/>
            <person name="Rocha E.P."/>
            <person name="Fialho A.M."/>
            <person name="Baldwin A."/>
            <person name="Dowson C."/>
            <person name="Barrell B.G."/>
            <person name="Govan J.R."/>
            <person name="Vandamme P."/>
            <person name="Hart C.A."/>
            <person name="Mahenthiralingam E."/>
            <person name="Parkhill J."/>
        </authorList>
    </citation>
    <scope>NUCLEOTIDE SEQUENCE [LARGE SCALE GENOMIC DNA]</scope>
    <source>
        <strain>ATCC BAA-245 / DSM 16553 / LMG 16656 / NCTC 13227 / J2315 / CF5610</strain>
    </source>
</reference>
<accession>B4EK78</accession>
<protein>
    <recommendedName>
        <fullName evidence="1">4-hydroxy-2-oxovalerate aldolase 1</fullName>
        <shortName evidence="1">HOA 1</shortName>
        <ecNumber evidence="1">4.1.3.39</ecNumber>
    </recommendedName>
    <alternativeName>
        <fullName evidence="1">4-hydroxy-2-keto-pentanoic acid aldolase 1</fullName>
    </alternativeName>
    <alternativeName>
        <fullName evidence="1">4-hydroxy-2-oxopentanoate aldolase 1</fullName>
    </alternativeName>
</protein>